<accession>Q9PI05</accession>
<accession>Q0PB09</accession>
<dbReference type="EC" id="6.1.1.7" evidence="1"/>
<dbReference type="EMBL" id="AL111168">
    <property type="protein sequence ID" value="CAL34653.1"/>
    <property type="molecule type" value="Genomic_DNA"/>
</dbReference>
<dbReference type="PIR" id="C81396">
    <property type="entry name" value="C81396"/>
</dbReference>
<dbReference type="RefSeq" id="WP_002858583.1">
    <property type="nucleotide sequence ID" value="NZ_SZUC01000002.1"/>
</dbReference>
<dbReference type="RefSeq" id="YP_002343938.1">
    <property type="nucleotide sequence ID" value="NC_002163.1"/>
</dbReference>
<dbReference type="SMR" id="Q9PI05"/>
<dbReference type="STRING" id="192222.Cj0506"/>
<dbReference type="PaxDb" id="192222-Cj0506"/>
<dbReference type="EnsemblBacteria" id="CAL34653">
    <property type="protein sequence ID" value="CAL34653"/>
    <property type="gene ID" value="Cj0506"/>
</dbReference>
<dbReference type="GeneID" id="904835"/>
<dbReference type="KEGG" id="cje:Cj0506"/>
<dbReference type="PATRIC" id="fig|192222.6.peg.499"/>
<dbReference type="eggNOG" id="COG0013">
    <property type="taxonomic scope" value="Bacteria"/>
</dbReference>
<dbReference type="HOGENOM" id="CLU_004485_1_1_7"/>
<dbReference type="OrthoDB" id="9803884at2"/>
<dbReference type="Proteomes" id="UP000000799">
    <property type="component" value="Chromosome"/>
</dbReference>
<dbReference type="GO" id="GO:0005829">
    <property type="term" value="C:cytosol"/>
    <property type="evidence" value="ECO:0007669"/>
    <property type="project" value="TreeGrafter"/>
</dbReference>
<dbReference type="GO" id="GO:0004813">
    <property type="term" value="F:alanine-tRNA ligase activity"/>
    <property type="evidence" value="ECO:0007669"/>
    <property type="project" value="UniProtKB-UniRule"/>
</dbReference>
<dbReference type="GO" id="GO:0002161">
    <property type="term" value="F:aminoacyl-tRNA deacylase activity"/>
    <property type="evidence" value="ECO:0007669"/>
    <property type="project" value="TreeGrafter"/>
</dbReference>
<dbReference type="GO" id="GO:0005524">
    <property type="term" value="F:ATP binding"/>
    <property type="evidence" value="ECO:0007669"/>
    <property type="project" value="UniProtKB-UniRule"/>
</dbReference>
<dbReference type="GO" id="GO:0000049">
    <property type="term" value="F:tRNA binding"/>
    <property type="evidence" value="ECO:0007669"/>
    <property type="project" value="UniProtKB-KW"/>
</dbReference>
<dbReference type="GO" id="GO:0008270">
    <property type="term" value="F:zinc ion binding"/>
    <property type="evidence" value="ECO:0007669"/>
    <property type="project" value="UniProtKB-UniRule"/>
</dbReference>
<dbReference type="GO" id="GO:0006419">
    <property type="term" value="P:alanyl-tRNA aminoacylation"/>
    <property type="evidence" value="ECO:0007669"/>
    <property type="project" value="UniProtKB-UniRule"/>
</dbReference>
<dbReference type="GO" id="GO:0045892">
    <property type="term" value="P:negative regulation of DNA-templated transcription"/>
    <property type="evidence" value="ECO:0007669"/>
    <property type="project" value="TreeGrafter"/>
</dbReference>
<dbReference type="CDD" id="cd00673">
    <property type="entry name" value="AlaRS_core"/>
    <property type="match status" value="1"/>
</dbReference>
<dbReference type="FunFam" id="3.10.310.40:FF:000001">
    <property type="entry name" value="Alanine--tRNA ligase"/>
    <property type="match status" value="1"/>
</dbReference>
<dbReference type="FunFam" id="3.30.54.20:FF:000001">
    <property type="entry name" value="Alanine--tRNA ligase"/>
    <property type="match status" value="1"/>
</dbReference>
<dbReference type="FunFam" id="3.30.930.10:FF:000004">
    <property type="entry name" value="Alanine--tRNA ligase"/>
    <property type="match status" value="1"/>
</dbReference>
<dbReference type="FunFam" id="3.30.980.10:FF:000004">
    <property type="entry name" value="Alanine--tRNA ligase, cytoplasmic"/>
    <property type="match status" value="1"/>
</dbReference>
<dbReference type="Gene3D" id="2.40.30.130">
    <property type="match status" value="1"/>
</dbReference>
<dbReference type="Gene3D" id="3.10.310.40">
    <property type="match status" value="1"/>
</dbReference>
<dbReference type="Gene3D" id="3.30.54.20">
    <property type="match status" value="1"/>
</dbReference>
<dbReference type="Gene3D" id="3.30.930.10">
    <property type="entry name" value="Bira Bifunctional Protein, Domain 2"/>
    <property type="match status" value="1"/>
</dbReference>
<dbReference type="Gene3D" id="3.30.980.10">
    <property type="entry name" value="Threonyl-trna Synthetase, Chain A, domain 2"/>
    <property type="match status" value="1"/>
</dbReference>
<dbReference type="HAMAP" id="MF_00036_B">
    <property type="entry name" value="Ala_tRNA_synth_B"/>
    <property type="match status" value="1"/>
</dbReference>
<dbReference type="InterPro" id="IPR045864">
    <property type="entry name" value="aa-tRNA-synth_II/BPL/LPL"/>
</dbReference>
<dbReference type="InterPro" id="IPR002318">
    <property type="entry name" value="Ala-tRNA-lgiase_IIc"/>
</dbReference>
<dbReference type="InterPro" id="IPR018162">
    <property type="entry name" value="Ala-tRNA-ligase_IIc_anticod-bd"/>
</dbReference>
<dbReference type="InterPro" id="IPR018165">
    <property type="entry name" value="Ala-tRNA-synth_IIc_core"/>
</dbReference>
<dbReference type="InterPro" id="IPR018164">
    <property type="entry name" value="Ala-tRNA-synth_IIc_N"/>
</dbReference>
<dbReference type="InterPro" id="IPR050058">
    <property type="entry name" value="Ala-tRNA_ligase"/>
</dbReference>
<dbReference type="InterPro" id="IPR023033">
    <property type="entry name" value="Ala_tRNA_ligase_euk/bac"/>
</dbReference>
<dbReference type="InterPro" id="IPR003156">
    <property type="entry name" value="DHHA1_dom"/>
</dbReference>
<dbReference type="InterPro" id="IPR018163">
    <property type="entry name" value="Thr/Ala-tRNA-synth_IIc_edit"/>
</dbReference>
<dbReference type="InterPro" id="IPR009000">
    <property type="entry name" value="Transl_B-barrel_sf"/>
</dbReference>
<dbReference type="InterPro" id="IPR012947">
    <property type="entry name" value="tRNA_SAD"/>
</dbReference>
<dbReference type="NCBIfam" id="TIGR00344">
    <property type="entry name" value="alaS"/>
    <property type="match status" value="1"/>
</dbReference>
<dbReference type="PANTHER" id="PTHR11777:SF9">
    <property type="entry name" value="ALANINE--TRNA LIGASE, CYTOPLASMIC"/>
    <property type="match status" value="1"/>
</dbReference>
<dbReference type="PANTHER" id="PTHR11777">
    <property type="entry name" value="ALANYL-TRNA SYNTHETASE"/>
    <property type="match status" value="1"/>
</dbReference>
<dbReference type="Pfam" id="PF02272">
    <property type="entry name" value="DHHA1"/>
    <property type="match status" value="1"/>
</dbReference>
<dbReference type="Pfam" id="PF01411">
    <property type="entry name" value="tRNA-synt_2c"/>
    <property type="match status" value="1"/>
</dbReference>
<dbReference type="Pfam" id="PF07973">
    <property type="entry name" value="tRNA_SAD"/>
    <property type="match status" value="1"/>
</dbReference>
<dbReference type="PRINTS" id="PR00980">
    <property type="entry name" value="TRNASYNTHALA"/>
</dbReference>
<dbReference type="SMART" id="SM00863">
    <property type="entry name" value="tRNA_SAD"/>
    <property type="match status" value="1"/>
</dbReference>
<dbReference type="SUPFAM" id="SSF55681">
    <property type="entry name" value="Class II aaRS and biotin synthetases"/>
    <property type="match status" value="1"/>
</dbReference>
<dbReference type="SUPFAM" id="SSF101353">
    <property type="entry name" value="Putative anticodon-binding domain of alanyl-tRNA synthetase (AlaRS)"/>
    <property type="match status" value="1"/>
</dbReference>
<dbReference type="SUPFAM" id="SSF55186">
    <property type="entry name" value="ThrRS/AlaRS common domain"/>
    <property type="match status" value="1"/>
</dbReference>
<dbReference type="SUPFAM" id="SSF50447">
    <property type="entry name" value="Translation proteins"/>
    <property type="match status" value="1"/>
</dbReference>
<dbReference type="PROSITE" id="PS50860">
    <property type="entry name" value="AA_TRNA_LIGASE_II_ALA"/>
    <property type="match status" value="1"/>
</dbReference>
<protein>
    <recommendedName>
        <fullName evidence="1">Alanine--tRNA ligase</fullName>
        <ecNumber evidence="1">6.1.1.7</ecNumber>
    </recommendedName>
    <alternativeName>
        <fullName evidence="1">Alanyl-tRNA synthetase</fullName>
        <shortName evidence="1">AlaRS</shortName>
    </alternativeName>
</protein>
<reference key="1">
    <citation type="journal article" date="2000" name="Nature">
        <title>The genome sequence of the food-borne pathogen Campylobacter jejuni reveals hypervariable sequences.</title>
        <authorList>
            <person name="Parkhill J."/>
            <person name="Wren B.W."/>
            <person name="Mungall K.L."/>
            <person name="Ketley J.M."/>
            <person name="Churcher C.M."/>
            <person name="Basham D."/>
            <person name="Chillingworth T."/>
            <person name="Davies R.M."/>
            <person name="Feltwell T."/>
            <person name="Holroyd S."/>
            <person name="Jagels K."/>
            <person name="Karlyshev A.V."/>
            <person name="Moule S."/>
            <person name="Pallen M.J."/>
            <person name="Penn C.W."/>
            <person name="Quail M.A."/>
            <person name="Rajandream M.A."/>
            <person name="Rutherford K.M."/>
            <person name="van Vliet A.H.M."/>
            <person name="Whitehead S."/>
            <person name="Barrell B.G."/>
        </authorList>
    </citation>
    <scope>NUCLEOTIDE SEQUENCE [LARGE SCALE GENOMIC DNA]</scope>
    <source>
        <strain>ATCC 700819 / NCTC 11168</strain>
    </source>
</reference>
<gene>
    <name evidence="1" type="primary">alaS</name>
    <name type="ordered locus">Cj0506</name>
</gene>
<comment type="function">
    <text evidence="1">Catalyzes the attachment of alanine to tRNA(Ala) in a two-step reaction: alanine is first activated by ATP to form Ala-AMP and then transferred to the acceptor end of tRNA(Ala). Also edits incorrectly charged Ser-tRNA(Ala) and Gly-tRNA(Ala) via its editing domain.</text>
</comment>
<comment type="catalytic activity">
    <reaction evidence="1">
        <text>tRNA(Ala) + L-alanine + ATP = L-alanyl-tRNA(Ala) + AMP + diphosphate</text>
        <dbReference type="Rhea" id="RHEA:12540"/>
        <dbReference type="Rhea" id="RHEA-COMP:9657"/>
        <dbReference type="Rhea" id="RHEA-COMP:9923"/>
        <dbReference type="ChEBI" id="CHEBI:30616"/>
        <dbReference type="ChEBI" id="CHEBI:33019"/>
        <dbReference type="ChEBI" id="CHEBI:57972"/>
        <dbReference type="ChEBI" id="CHEBI:78442"/>
        <dbReference type="ChEBI" id="CHEBI:78497"/>
        <dbReference type="ChEBI" id="CHEBI:456215"/>
        <dbReference type="EC" id="6.1.1.7"/>
    </reaction>
</comment>
<comment type="cofactor">
    <cofactor evidence="1">
        <name>Zn(2+)</name>
        <dbReference type="ChEBI" id="CHEBI:29105"/>
    </cofactor>
    <text evidence="1">Binds 1 zinc ion per subunit.</text>
</comment>
<comment type="subcellular location">
    <subcellularLocation>
        <location evidence="1">Cytoplasm</location>
    </subcellularLocation>
</comment>
<comment type="domain">
    <text evidence="1">Consists of three domains; the N-terminal catalytic domain, the editing domain and the C-terminal C-Ala domain. The editing domain removes incorrectly charged amino acids, while the C-Ala domain, along with tRNA(Ala), serves as a bridge to cooperatively bring together the editing and aminoacylation centers thus stimulating deacylation of misacylated tRNAs.</text>
</comment>
<comment type="similarity">
    <text evidence="1">Belongs to the class-II aminoacyl-tRNA synthetase family.</text>
</comment>
<keyword id="KW-0030">Aminoacyl-tRNA synthetase</keyword>
<keyword id="KW-0067">ATP-binding</keyword>
<keyword id="KW-0963">Cytoplasm</keyword>
<keyword id="KW-0436">Ligase</keyword>
<keyword id="KW-0479">Metal-binding</keyword>
<keyword id="KW-0547">Nucleotide-binding</keyword>
<keyword id="KW-0648">Protein biosynthesis</keyword>
<keyword id="KW-1185">Reference proteome</keyword>
<keyword id="KW-0694">RNA-binding</keyword>
<keyword id="KW-0820">tRNA-binding</keyword>
<keyword id="KW-0862">Zinc</keyword>
<proteinExistence type="inferred from homology"/>
<feature type="chain" id="PRO_0000075083" description="Alanine--tRNA ligase">
    <location>
        <begin position="1"/>
        <end position="842"/>
    </location>
</feature>
<feature type="binding site" evidence="1">
    <location>
        <position position="549"/>
    </location>
    <ligand>
        <name>Zn(2+)</name>
        <dbReference type="ChEBI" id="CHEBI:29105"/>
    </ligand>
</feature>
<feature type="binding site" evidence="1">
    <location>
        <position position="553"/>
    </location>
    <ligand>
        <name>Zn(2+)</name>
        <dbReference type="ChEBI" id="CHEBI:29105"/>
    </ligand>
</feature>
<feature type="binding site" evidence="1">
    <location>
        <position position="650"/>
    </location>
    <ligand>
        <name>Zn(2+)</name>
        <dbReference type="ChEBI" id="CHEBI:29105"/>
    </ligand>
</feature>
<feature type="binding site" evidence="1">
    <location>
        <position position="654"/>
    </location>
    <ligand>
        <name>Zn(2+)</name>
        <dbReference type="ChEBI" id="CHEBI:29105"/>
    </ligand>
</feature>
<sequence length="842" mass="94906">MDIRKAYLDFFASKGHEITPSSPLVPDDATLLFTNAGMVPFKSIFTGEIPRPNPPRKTSCQTCIRAGGKHNDLDNVGYTARHHTFFEMLGNFSFGDYFKEQAIAYAWEFVTEVLKLPKDRLYVTVHENDDEAFNLWQKHIQKERIYKFGDKDNFWQMGDTGPCGPCSEIFYDQGQEHFNSSEDYMGGDGDRFLEIWNLVFMQYERSADGVLSPLPKPSIDTGMGLERVTAIKEGKFSNFDSSLFMPIINEISKLCNKTYVYESGASFRVIADHIRSSVFLLAQGVSFDKEGRGYVLRRILRRALRHGYLLGFKQAFMYKLVDVVCDLMGGHYTYLNEKKDFIKEQIRLEEERFLSTIENGIEIFNEELKNTKEIFSGEVAFKLYDTYGFPLDLTADMLREKNLKVDEEKFELFMNEQKARAKASWKGSGDKTASGDFKNLLEKFGENHFVGYEKAECESKILALLDEDFKEVSTLKDAGWVMLENTPFYATSGGQSADSGFIAKREVLDTQKFFNLNLSFIKAGEELKVNDIVHARIDTEKREQIARHHSATHLLHHALREILGSHVSQAGSLVESNKLRFDFTHHKALNKEELESIEKRVNKMIINSSEAILENMPLEEAKKSGAIALFNEKYQGNVRVLTLGESKELCGGTHVKNTAQIGSFYIVKESGVSAGVRRIEAVVSKAALEFVKNQLEELSKVKDELKNNDILSGIKKLKNEILSLKNELKNSSKTELDSKNIQGVEICVKRIDNGDIKAMIDDFKNKFAKAVILLIQVKDEKITLAAGVKDVPLKAGALVKEAAQILGGNGGGRDDFATAGGKDLSKINEALKQSLETIEKAL</sequence>
<evidence type="ECO:0000255" key="1">
    <source>
        <dbReference type="HAMAP-Rule" id="MF_00036"/>
    </source>
</evidence>
<organism>
    <name type="scientific">Campylobacter jejuni subsp. jejuni serotype O:2 (strain ATCC 700819 / NCTC 11168)</name>
    <dbReference type="NCBI Taxonomy" id="192222"/>
    <lineage>
        <taxon>Bacteria</taxon>
        <taxon>Pseudomonadati</taxon>
        <taxon>Campylobacterota</taxon>
        <taxon>Epsilonproteobacteria</taxon>
        <taxon>Campylobacterales</taxon>
        <taxon>Campylobacteraceae</taxon>
        <taxon>Campylobacter</taxon>
    </lineage>
</organism>
<name>SYA_CAMJE</name>